<feature type="signal peptide">
    <location>
        <begin position="1"/>
        <end position="14"/>
    </location>
</feature>
<feature type="chain" id="PRO_0000035238" description="Neurotoxin BmK-M9">
    <location>
        <begin position="15"/>
        <end position="78"/>
    </location>
</feature>
<feature type="propeptide" id="PRO_0000035239" description="Removed by a carboxypeptidase" evidence="3">
    <location>
        <position position="79"/>
    </location>
</feature>
<feature type="domain" description="LCN-type CS-alpha/beta" evidence="1">
    <location>
        <begin position="16"/>
        <end position="78"/>
    </location>
</feature>
<feature type="disulfide bond" evidence="1 2">
    <location>
        <begin position="26"/>
        <end position="77"/>
    </location>
</feature>
<feature type="disulfide bond" evidence="1 2">
    <location>
        <begin position="30"/>
        <end position="50"/>
    </location>
</feature>
<feature type="disulfide bond" evidence="1 2">
    <location>
        <begin position="36"/>
        <end position="60"/>
    </location>
</feature>
<feature type="disulfide bond" evidence="1 2">
    <location>
        <begin position="40"/>
        <end position="62"/>
    </location>
</feature>
<comment type="function">
    <text>Binds to sodium channels (Nav) and inhibits the inactivation of the activated channels, thereby blocking neuronal transmission. This toxin is active against mammals.</text>
</comment>
<comment type="subcellular location">
    <subcellularLocation>
        <location>Secreted</location>
    </subcellularLocation>
</comment>
<comment type="tissue specificity">
    <text>Expressed by the venom gland.</text>
</comment>
<comment type="domain">
    <text evidence="3">Has the structural arrangement of an alpha-helix connected to antiparallel beta-sheets by disulfide bonds (CS-alpha/beta).</text>
</comment>
<comment type="similarity">
    <text evidence="3">Belongs to the long (4 C-C) scorpion toxin superfamily. Sodium channel inhibitor family. Alpha subfamily.</text>
</comment>
<evidence type="ECO:0000255" key="1">
    <source>
        <dbReference type="PROSITE-ProRule" id="PRU01210"/>
    </source>
</evidence>
<evidence type="ECO:0000269" key="2">
    <source>
    </source>
</evidence>
<evidence type="ECO:0000305" key="3"/>
<reference key="1">
    <citation type="journal article" date="1997" name="Sheng Wu Hua Xue Yu Sheng Wu Wu Li Xue Bao">
        <title>cDNA sequences of two anti-mammal neurotoxins from Scorpion Buthus martensii Karsch.</title>
        <authorList>
            <person name="Xiong Y.-M."/>
            <person name="Ling M.-H."/>
            <person name="Chi C.-W."/>
            <person name="Wang D.-C."/>
        </authorList>
    </citation>
    <scope>NUCLEOTIDE SEQUENCE [MRNA]</scope>
    <source>
        <tissue>Venom gland</tissue>
    </source>
</reference>
<reference key="2">
    <citation type="journal article" date="1992" name="J. Mol. Biol.">
        <title>Structure of scorpion toxin variant-3 at 1.2-A resolution.</title>
        <authorList>
            <person name="Zhao B."/>
            <person name="Carson M."/>
            <person name="Ealick S.E."/>
            <person name="Bugg C.E."/>
        </authorList>
    </citation>
    <scope>X-RAY CRYSTALLOGRAPHY (1.3 ANGSTROMS) OF 15-78</scope>
    <scope>DISULFIDE BONDS</scope>
</reference>
<proteinExistence type="evidence at protein level"/>
<dbReference type="EMBL" id="U28660">
    <property type="protein sequence ID" value="AAA69558.1"/>
    <property type="molecule type" value="mRNA"/>
</dbReference>
<dbReference type="SMR" id="P45698"/>
<dbReference type="GO" id="GO:0005576">
    <property type="term" value="C:extracellular region"/>
    <property type="evidence" value="ECO:0007669"/>
    <property type="project" value="UniProtKB-SubCell"/>
</dbReference>
<dbReference type="GO" id="GO:0019871">
    <property type="term" value="F:sodium channel inhibitor activity"/>
    <property type="evidence" value="ECO:0007669"/>
    <property type="project" value="InterPro"/>
</dbReference>
<dbReference type="GO" id="GO:0090729">
    <property type="term" value="F:toxin activity"/>
    <property type="evidence" value="ECO:0007669"/>
    <property type="project" value="UniProtKB-KW"/>
</dbReference>
<dbReference type="GO" id="GO:0006952">
    <property type="term" value="P:defense response"/>
    <property type="evidence" value="ECO:0007669"/>
    <property type="project" value="InterPro"/>
</dbReference>
<dbReference type="CDD" id="cd23106">
    <property type="entry name" value="neurotoxins_LC_scorpion"/>
    <property type="match status" value="1"/>
</dbReference>
<dbReference type="FunFam" id="3.30.30.10:FF:000002">
    <property type="entry name" value="Alpha-like toxin BmK-M1"/>
    <property type="match status" value="1"/>
</dbReference>
<dbReference type="Gene3D" id="3.30.30.10">
    <property type="entry name" value="Knottin, scorpion toxin-like"/>
    <property type="match status" value="1"/>
</dbReference>
<dbReference type="InterPro" id="IPR044062">
    <property type="entry name" value="LCN-type_CS_alpha_beta_dom"/>
</dbReference>
<dbReference type="InterPro" id="IPR003614">
    <property type="entry name" value="Scorpion_toxin-like"/>
</dbReference>
<dbReference type="InterPro" id="IPR036574">
    <property type="entry name" value="Scorpion_toxin-like_sf"/>
</dbReference>
<dbReference type="InterPro" id="IPR018218">
    <property type="entry name" value="Scorpion_toxinL"/>
</dbReference>
<dbReference type="InterPro" id="IPR002061">
    <property type="entry name" value="Scorpion_toxinL/defensin"/>
</dbReference>
<dbReference type="Pfam" id="PF00537">
    <property type="entry name" value="Toxin_3"/>
    <property type="match status" value="1"/>
</dbReference>
<dbReference type="PRINTS" id="PR00285">
    <property type="entry name" value="SCORPNTOXIN"/>
</dbReference>
<dbReference type="SMART" id="SM00505">
    <property type="entry name" value="Knot1"/>
    <property type="match status" value="1"/>
</dbReference>
<dbReference type="SUPFAM" id="SSF57095">
    <property type="entry name" value="Scorpion toxin-like"/>
    <property type="match status" value="1"/>
</dbReference>
<dbReference type="PROSITE" id="PS51863">
    <property type="entry name" value="LCN_CSAB"/>
    <property type="match status" value="1"/>
</dbReference>
<organism>
    <name type="scientific">Olivierus martensii</name>
    <name type="common">Manchurian scorpion</name>
    <name type="synonym">Mesobuthus martensii</name>
    <dbReference type="NCBI Taxonomy" id="34649"/>
    <lineage>
        <taxon>Eukaryota</taxon>
        <taxon>Metazoa</taxon>
        <taxon>Ecdysozoa</taxon>
        <taxon>Arthropoda</taxon>
        <taxon>Chelicerata</taxon>
        <taxon>Arachnida</taxon>
        <taxon>Scorpiones</taxon>
        <taxon>Buthida</taxon>
        <taxon>Buthoidea</taxon>
        <taxon>Buthidae</taxon>
        <taxon>Olivierus</taxon>
    </lineage>
</organism>
<protein>
    <recommendedName>
        <fullName>Neurotoxin BmK-M9</fullName>
        <shortName>BmK9</shortName>
        <shortName>Bmk M9</shortName>
        <shortName>BmkM9</shortName>
    </recommendedName>
    <alternativeName>
        <fullName>BmK-IX</fullName>
    </alternativeName>
</protein>
<accession>P45698</accession>
<keyword id="KW-1015">Disulfide bond</keyword>
<keyword id="KW-0872">Ion channel impairing toxin</keyword>
<keyword id="KW-0528">Neurotoxin</keyword>
<keyword id="KW-0964">Secreted</keyword>
<keyword id="KW-0732">Signal</keyword>
<keyword id="KW-0800">Toxin</keyword>
<keyword id="KW-0738">Voltage-gated sodium channel impairing toxin</keyword>
<sequence length="79" mass="8756">MISFALLLMTGVESVRDAYIAKPENCVYHCATNEGCNKLCTDNGAESGYCQWGGRYGNACWCIKLPDRVPIRVPGKCHR</sequence>
<name>SCX9_OLIMR</name>